<dbReference type="EMBL" id="CP000112">
    <property type="protein sequence ID" value="ABB39191.1"/>
    <property type="molecule type" value="Genomic_DNA"/>
</dbReference>
<dbReference type="RefSeq" id="WP_011368264.1">
    <property type="nucleotide sequence ID" value="NC_007519.1"/>
</dbReference>
<dbReference type="SMR" id="Q30YQ5"/>
<dbReference type="STRING" id="207559.Dde_2394"/>
<dbReference type="KEGG" id="dde:Dde_2394"/>
<dbReference type="eggNOG" id="COG0706">
    <property type="taxonomic scope" value="Bacteria"/>
</dbReference>
<dbReference type="HOGENOM" id="CLU_016535_3_0_7"/>
<dbReference type="Proteomes" id="UP000002710">
    <property type="component" value="Chromosome"/>
</dbReference>
<dbReference type="GO" id="GO:0005886">
    <property type="term" value="C:plasma membrane"/>
    <property type="evidence" value="ECO:0007669"/>
    <property type="project" value="UniProtKB-SubCell"/>
</dbReference>
<dbReference type="GO" id="GO:0032977">
    <property type="term" value="F:membrane insertase activity"/>
    <property type="evidence" value="ECO:0007669"/>
    <property type="project" value="InterPro"/>
</dbReference>
<dbReference type="GO" id="GO:0051205">
    <property type="term" value="P:protein insertion into membrane"/>
    <property type="evidence" value="ECO:0007669"/>
    <property type="project" value="TreeGrafter"/>
</dbReference>
<dbReference type="GO" id="GO:0015031">
    <property type="term" value="P:protein transport"/>
    <property type="evidence" value="ECO:0007669"/>
    <property type="project" value="UniProtKB-KW"/>
</dbReference>
<dbReference type="CDD" id="cd20070">
    <property type="entry name" value="5TM_YidC_Alb3"/>
    <property type="match status" value="1"/>
</dbReference>
<dbReference type="CDD" id="cd19961">
    <property type="entry name" value="EcYidC-like_peri"/>
    <property type="match status" value="1"/>
</dbReference>
<dbReference type="Gene3D" id="2.70.98.90">
    <property type="match status" value="1"/>
</dbReference>
<dbReference type="HAMAP" id="MF_01810">
    <property type="entry name" value="YidC_type1"/>
    <property type="match status" value="1"/>
</dbReference>
<dbReference type="InterPro" id="IPR019998">
    <property type="entry name" value="Membr_insert_YidC"/>
</dbReference>
<dbReference type="InterPro" id="IPR028053">
    <property type="entry name" value="Membr_insert_YidC_N"/>
</dbReference>
<dbReference type="InterPro" id="IPR001708">
    <property type="entry name" value="YidC/ALB3/OXA1/COX18"/>
</dbReference>
<dbReference type="InterPro" id="IPR028055">
    <property type="entry name" value="YidC/Oxa/ALB_C"/>
</dbReference>
<dbReference type="InterPro" id="IPR047196">
    <property type="entry name" value="YidC_ALB_C"/>
</dbReference>
<dbReference type="InterPro" id="IPR038221">
    <property type="entry name" value="YidC_periplasmic_sf"/>
</dbReference>
<dbReference type="NCBIfam" id="TIGR03593">
    <property type="entry name" value="yidC_nterm"/>
    <property type="match status" value="1"/>
</dbReference>
<dbReference type="NCBIfam" id="TIGR03592">
    <property type="entry name" value="yidC_oxa1_cterm"/>
    <property type="match status" value="1"/>
</dbReference>
<dbReference type="PANTHER" id="PTHR12428:SF65">
    <property type="entry name" value="CYTOCHROME C OXIDASE ASSEMBLY PROTEIN COX18, MITOCHONDRIAL"/>
    <property type="match status" value="1"/>
</dbReference>
<dbReference type="PANTHER" id="PTHR12428">
    <property type="entry name" value="OXA1"/>
    <property type="match status" value="1"/>
</dbReference>
<dbReference type="Pfam" id="PF02096">
    <property type="entry name" value="60KD_IMP"/>
    <property type="match status" value="1"/>
</dbReference>
<dbReference type="Pfam" id="PF14849">
    <property type="entry name" value="YidC_periplas"/>
    <property type="match status" value="1"/>
</dbReference>
<dbReference type="PRINTS" id="PR00701">
    <property type="entry name" value="60KDINNERMP"/>
</dbReference>
<dbReference type="PRINTS" id="PR01900">
    <property type="entry name" value="YIDCPROTEIN"/>
</dbReference>
<keyword id="KW-0997">Cell inner membrane</keyword>
<keyword id="KW-1003">Cell membrane</keyword>
<keyword id="KW-0143">Chaperone</keyword>
<keyword id="KW-0472">Membrane</keyword>
<keyword id="KW-0653">Protein transport</keyword>
<keyword id="KW-1185">Reference proteome</keyword>
<keyword id="KW-0812">Transmembrane</keyword>
<keyword id="KW-1133">Transmembrane helix</keyword>
<keyword id="KW-0813">Transport</keyword>
<protein>
    <recommendedName>
        <fullName evidence="1">Membrane protein insertase YidC</fullName>
    </recommendedName>
    <alternativeName>
        <fullName evidence="1">Foldase YidC</fullName>
    </alternativeName>
    <alternativeName>
        <fullName evidence="1">Membrane integrase YidC</fullName>
    </alternativeName>
    <alternativeName>
        <fullName evidence="1">Membrane protein YidC</fullName>
    </alternativeName>
</protein>
<name>YIDC_OLEA2</name>
<evidence type="ECO:0000255" key="1">
    <source>
        <dbReference type="HAMAP-Rule" id="MF_01810"/>
    </source>
</evidence>
<evidence type="ECO:0000256" key="2">
    <source>
        <dbReference type="SAM" id="MobiDB-lite"/>
    </source>
</evidence>
<sequence>MENKRPIIAVVLSLFVLIGWSYLSEFMGWTPAPAPVEQNATAVQQKASEPVAQPVQTASAPAASSFAPTEGREVKVDTPLYTAVFQSQGGVLKHFRLKKYTESIEEGAPLVELVTPEAAGKAPMGLLLNGQPTWKLAAWQFEGDDLKLDGSGKGELVFVGEMDGVRFERTLSFDPETYLISEKVRLTDTAGVSRDVRLGMTLSTTSLSPEGGAYNLTRMAWYQDGFHQETSADDLRETGVKVDEGVNWGGVMCNYFMAVMAPAEGALPFKGVLEGGVYRSVVENSSLSIASGSSAEFGIGYYIGPKESDRLAAMPYHLDEALNYGWFTFLAKPLVSGLKFFYSYAGNYGVAIIILTILVKLLFWPLSQKSYKSMEQMKKLQPMVQKIKEKYGDDRQRMNQEVMELYKTYKVNPAGGCLPMLLQIPVFLGLYQGLLNAIELRHAPFIAHLPFTDIVWLADLSAKDPFYITPVVMGATMLLQQRLTPAPADPTQAKIMMFMPVVFTFMFLNFPAGLVVYWLVNNVLSIGQQWWMLRKS</sequence>
<accession>Q30YQ5</accession>
<organism>
    <name type="scientific">Oleidesulfovibrio alaskensis (strain ATCC BAA-1058 / DSM 17464 / G20)</name>
    <name type="common">Desulfovibrio alaskensis</name>
    <dbReference type="NCBI Taxonomy" id="207559"/>
    <lineage>
        <taxon>Bacteria</taxon>
        <taxon>Pseudomonadati</taxon>
        <taxon>Thermodesulfobacteriota</taxon>
        <taxon>Desulfovibrionia</taxon>
        <taxon>Desulfovibrionales</taxon>
        <taxon>Desulfovibrionaceae</taxon>
        <taxon>Oleidesulfovibrio</taxon>
    </lineage>
</organism>
<feature type="chain" id="PRO_1000215965" description="Membrane protein insertase YidC">
    <location>
        <begin position="1"/>
        <end position="536"/>
    </location>
</feature>
<feature type="transmembrane region" description="Helical" evidence="1">
    <location>
        <begin position="7"/>
        <end position="27"/>
    </location>
</feature>
<feature type="transmembrane region" description="Helical" evidence="1">
    <location>
        <begin position="346"/>
        <end position="366"/>
    </location>
</feature>
<feature type="transmembrane region" description="Helical" evidence="1">
    <location>
        <begin position="415"/>
        <end position="435"/>
    </location>
</feature>
<feature type="transmembrane region" description="Helical" evidence="1">
    <location>
        <begin position="495"/>
        <end position="515"/>
    </location>
</feature>
<feature type="region of interest" description="Disordered" evidence="2">
    <location>
        <begin position="43"/>
        <end position="70"/>
    </location>
</feature>
<feature type="compositionally biased region" description="Low complexity" evidence="2">
    <location>
        <begin position="58"/>
        <end position="68"/>
    </location>
</feature>
<proteinExistence type="inferred from homology"/>
<comment type="function">
    <text evidence="1">Required for the insertion and/or proper folding and/or complex formation of integral membrane proteins into the membrane. Involved in integration of membrane proteins that insert both dependently and independently of the Sec translocase complex, as well as at least some lipoproteins. Aids folding of multispanning membrane proteins.</text>
</comment>
<comment type="subunit">
    <text evidence="1">Interacts with the Sec translocase complex via SecD. Specifically interacts with transmembrane segments of nascent integral membrane proteins during membrane integration.</text>
</comment>
<comment type="subcellular location">
    <subcellularLocation>
        <location evidence="1">Cell inner membrane</location>
        <topology evidence="1">Multi-pass membrane protein</topology>
    </subcellularLocation>
</comment>
<comment type="similarity">
    <text evidence="1">Belongs to the OXA1/ALB3/YidC family. Type 1 subfamily.</text>
</comment>
<gene>
    <name evidence="1" type="primary">yidC</name>
    <name type="ordered locus">Dde_2394</name>
</gene>
<reference key="1">
    <citation type="journal article" date="2011" name="J. Bacteriol.">
        <title>Complete genome sequence and updated annotation of Desulfovibrio alaskensis G20.</title>
        <authorList>
            <person name="Hauser L.J."/>
            <person name="Land M.L."/>
            <person name="Brown S.D."/>
            <person name="Larimer F."/>
            <person name="Keller K.L."/>
            <person name="Rapp-Giles B.J."/>
            <person name="Price M.N."/>
            <person name="Lin M."/>
            <person name="Bruce D.C."/>
            <person name="Detter J.C."/>
            <person name="Tapia R."/>
            <person name="Han C.S."/>
            <person name="Goodwin L.A."/>
            <person name="Cheng J.F."/>
            <person name="Pitluck S."/>
            <person name="Copeland A."/>
            <person name="Lucas S."/>
            <person name="Nolan M."/>
            <person name="Lapidus A.L."/>
            <person name="Palumbo A.V."/>
            <person name="Wall J.D."/>
        </authorList>
    </citation>
    <scope>NUCLEOTIDE SEQUENCE [LARGE SCALE GENOMIC DNA]</scope>
    <source>
        <strain>ATCC BAA-1058 / DSM 17464 / G20</strain>
    </source>
</reference>